<organism>
    <name type="scientific">Arabidopsis thaliana</name>
    <name type="common">Mouse-ear cress</name>
    <dbReference type="NCBI Taxonomy" id="3702"/>
    <lineage>
        <taxon>Eukaryota</taxon>
        <taxon>Viridiplantae</taxon>
        <taxon>Streptophyta</taxon>
        <taxon>Embryophyta</taxon>
        <taxon>Tracheophyta</taxon>
        <taxon>Spermatophyta</taxon>
        <taxon>Magnoliopsida</taxon>
        <taxon>eudicotyledons</taxon>
        <taxon>Gunneridae</taxon>
        <taxon>Pentapetalae</taxon>
        <taxon>rosids</taxon>
        <taxon>malvids</taxon>
        <taxon>Brassicales</taxon>
        <taxon>Brassicaceae</taxon>
        <taxon>Camelineae</taxon>
        <taxon>Arabidopsis</taxon>
    </lineage>
</organism>
<comment type="function">
    <text>1-aminocyclopropane-1-carboxylate synthase (ACS) enzymes catalyze the conversion of S-adenosyl-L-methionine (SAM) into 1-aminocyclopropane-1-carboxylate (ACC), a direct precursor of ethylene.</text>
</comment>
<comment type="catalytic activity">
    <reaction evidence="2">
        <text>S-adenosyl-L-methionine = 1-aminocyclopropane-1-carboxylate + S-methyl-5'-thioadenosine + H(+)</text>
        <dbReference type="Rhea" id="RHEA:21744"/>
        <dbReference type="ChEBI" id="CHEBI:15378"/>
        <dbReference type="ChEBI" id="CHEBI:17509"/>
        <dbReference type="ChEBI" id="CHEBI:58360"/>
        <dbReference type="ChEBI" id="CHEBI:59789"/>
        <dbReference type="EC" id="4.4.1.14"/>
    </reaction>
</comment>
<comment type="cofactor">
    <cofactor>
        <name>pyridoxal 5'-phosphate</name>
        <dbReference type="ChEBI" id="CHEBI:597326"/>
    </cofactor>
</comment>
<comment type="biophysicochemical properties">
    <kinetics>
        <KM>8.3 uM for AdoMet</KM>
        <Vmax>13.5 uM/h/mg enzyme</Vmax>
    </kinetics>
    <phDependence>
        <text>Optimum pH is 8.</text>
    </phDependence>
</comment>
<comment type="pathway">
    <text>Alkene biosynthesis; ethylene biosynthesis via S-adenosyl-L-methionine; ethylene from S-adenosyl-L-methionine: step 1/2.</text>
</comment>
<comment type="subunit">
    <text evidence="1 3">Homodimer and heterodimer. In vivo, the relevance of heterodimerization with other ACS enzymes is however unsure (By similarity). Interacts with XBAT32.</text>
</comment>
<comment type="interaction">
    <interactant intactId="EBI-2356842">
        <id>Q9STR4</id>
    </interactant>
    <interactant intactId="EBI-2436015">
        <id>Q43309</id>
        <label>ACS4</label>
    </interactant>
    <organismsDiffer>false</organismsDiffer>
    <experiments>4</experiments>
</comment>
<comment type="interaction">
    <interactant intactId="EBI-2356842">
        <id>Q9STR4</id>
    </interactant>
    <interactant intactId="EBI-2356842">
        <id>Q9STR4</id>
        <label>ACS7</label>
    </interactant>
    <organismsDiffer>false</organismsDiffer>
    <experiments>2</experiments>
</comment>
<comment type="tissue specificity">
    <text evidence="2">Expressed in roots.</text>
</comment>
<comment type="induction">
    <text evidence="2">By cycloheximide (CHX).</text>
</comment>
<comment type="PTM">
    <text evidence="3">Ubiquitinated by XBAT32. Ubiquitination probably leads to its subsequent degradation, thus controlling ethylene production.</text>
</comment>
<comment type="miscellaneous">
    <text>The stability of ACS proteins, and the regulation of such stability, play a central role in ethylene biosynthesis.</text>
</comment>
<comment type="similarity">
    <text evidence="4">Belongs to the class-I pyridoxal-phosphate-dependent aminotransferase family.</text>
</comment>
<accession>Q9STR4</accession>
<evidence type="ECO:0000250" key="1"/>
<evidence type="ECO:0000269" key="2">
    <source>
    </source>
</evidence>
<evidence type="ECO:0000269" key="3">
    <source>
    </source>
</evidence>
<evidence type="ECO:0000305" key="4"/>
<evidence type="ECO:0007829" key="5">
    <source>
        <dbReference type="PDB" id="7DLW"/>
    </source>
</evidence>
<evidence type="ECO:0007829" key="6">
    <source>
        <dbReference type="PDB" id="7DLY"/>
    </source>
</evidence>
<gene>
    <name type="primary">ACS7</name>
    <name type="ordered locus">At4g26200</name>
    <name type="ORF">T25K17.10</name>
</gene>
<proteinExistence type="evidence at protein level"/>
<name>1A17_ARATH</name>
<feature type="chain" id="PRO_0000123901" description="1-aminocyclopropane-1-carboxylate synthase 7">
    <location>
        <begin position="1"/>
        <end position="447"/>
    </location>
</feature>
<feature type="binding site" evidence="1">
    <location>
        <position position="61"/>
    </location>
    <ligand>
        <name>substrate</name>
    </ligand>
</feature>
<feature type="binding site" evidence="1">
    <location>
        <position position="100"/>
    </location>
    <ligand>
        <name>substrate</name>
    </ligand>
</feature>
<feature type="modified residue" description="N6-(pyridoxal phosphate)lysine" evidence="1">
    <location>
        <position position="285"/>
    </location>
</feature>
<feature type="helix" evidence="5">
    <location>
        <begin position="20"/>
        <end position="23"/>
    </location>
</feature>
<feature type="helix" evidence="5">
    <location>
        <begin position="32"/>
        <end position="42"/>
    </location>
</feature>
<feature type="turn" evidence="5">
    <location>
        <begin position="47"/>
        <end position="49"/>
    </location>
</feature>
<feature type="strand" evidence="5">
    <location>
        <begin position="53"/>
        <end position="56"/>
    </location>
</feature>
<feature type="helix" evidence="5">
    <location>
        <begin position="66"/>
        <end position="70"/>
    </location>
</feature>
<feature type="helix" evidence="5">
    <location>
        <begin position="92"/>
        <end position="95"/>
    </location>
</feature>
<feature type="helix" evidence="5">
    <location>
        <begin position="104"/>
        <end position="117"/>
    </location>
</feature>
<feature type="turn" evidence="5">
    <location>
        <begin position="118"/>
        <end position="120"/>
    </location>
</feature>
<feature type="helix" evidence="5">
    <location>
        <begin position="126"/>
        <end position="128"/>
    </location>
</feature>
<feature type="strand" evidence="5">
    <location>
        <begin position="129"/>
        <end position="133"/>
    </location>
</feature>
<feature type="helix" evidence="5">
    <location>
        <begin position="134"/>
        <end position="146"/>
    </location>
</feature>
<feature type="strand" evidence="5">
    <location>
        <begin position="152"/>
        <end position="158"/>
    </location>
</feature>
<feature type="helix" evidence="5">
    <location>
        <begin position="163"/>
        <end position="166"/>
    </location>
</feature>
<feature type="turn" evidence="5">
    <location>
        <begin position="167"/>
        <end position="171"/>
    </location>
</feature>
<feature type="strand" evidence="5">
    <location>
        <begin position="174"/>
        <end position="178"/>
    </location>
</feature>
<feature type="helix" evidence="5">
    <location>
        <begin position="182"/>
        <end position="184"/>
    </location>
</feature>
<feature type="helix" evidence="5">
    <location>
        <begin position="190"/>
        <end position="202"/>
    </location>
</feature>
<feature type="strand" evidence="5">
    <location>
        <begin position="207"/>
        <end position="215"/>
    </location>
</feature>
<feature type="turn" evidence="5">
    <location>
        <begin position="217"/>
        <end position="219"/>
    </location>
</feature>
<feature type="helix" evidence="5">
    <location>
        <begin position="225"/>
        <end position="238"/>
    </location>
</feature>
<feature type="strand" evidence="5">
    <location>
        <begin position="241"/>
        <end position="245"/>
    </location>
</feature>
<feature type="helix" evidence="5">
    <location>
        <begin position="249"/>
        <end position="251"/>
    </location>
</feature>
<feature type="strand" evidence="5">
    <location>
        <begin position="252"/>
        <end position="254"/>
    </location>
</feature>
<feature type="helix" evidence="5">
    <location>
        <begin position="255"/>
        <end position="257"/>
    </location>
</feature>
<feature type="helix" evidence="5">
    <location>
        <begin position="261"/>
        <end position="266"/>
    </location>
</feature>
<feature type="helix" evidence="5">
    <location>
        <begin position="271"/>
        <end position="274"/>
    </location>
</feature>
<feature type="strand" evidence="5">
    <location>
        <begin position="277"/>
        <end position="283"/>
    </location>
</feature>
<feature type="turn" evidence="5">
    <location>
        <begin position="284"/>
        <end position="286"/>
    </location>
</feature>
<feature type="helix" evidence="5">
    <location>
        <begin position="290"/>
        <end position="292"/>
    </location>
</feature>
<feature type="strand" evidence="5">
    <location>
        <begin position="295"/>
        <end position="300"/>
    </location>
</feature>
<feature type="helix" evidence="5">
    <location>
        <begin position="302"/>
        <end position="311"/>
    </location>
</feature>
<feature type="helix" evidence="5">
    <location>
        <begin position="312"/>
        <end position="314"/>
    </location>
</feature>
<feature type="helix" evidence="5">
    <location>
        <begin position="319"/>
        <end position="330"/>
    </location>
</feature>
<feature type="helix" evidence="5">
    <location>
        <begin position="332"/>
        <end position="359"/>
    </location>
</feature>
<feature type="strand" evidence="5">
    <location>
        <begin position="369"/>
        <end position="376"/>
    </location>
</feature>
<feature type="helix" evidence="5">
    <location>
        <begin position="378"/>
        <end position="380"/>
    </location>
</feature>
<feature type="strand" evidence="5">
    <location>
        <begin position="382"/>
        <end position="385"/>
    </location>
</feature>
<feature type="helix" evidence="5">
    <location>
        <begin position="386"/>
        <end position="398"/>
    </location>
</feature>
<feature type="strand" evidence="6">
    <location>
        <begin position="402"/>
        <end position="406"/>
    </location>
</feature>
<feature type="helix" evidence="5">
    <location>
        <begin position="407"/>
        <end position="410"/>
    </location>
</feature>
<feature type="strand" evidence="5">
    <location>
        <begin position="417"/>
        <end position="421"/>
    </location>
</feature>
<feature type="strand" evidence="5">
    <location>
        <begin position="423"/>
        <end position="425"/>
    </location>
</feature>
<feature type="helix" evidence="5">
    <location>
        <begin position="427"/>
        <end position="440"/>
    </location>
</feature>
<reference key="1">
    <citation type="journal article" date="1999" name="Nature">
        <title>Sequence and analysis of chromosome 4 of the plant Arabidopsis thaliana.</title>
        <authorList>
            <person name="Mayer K.F.X."/>
            <person name="Schueller C."/>
            <person name="Wambutt R."/>
            <person name="Murphy G."/>
            <person name="Volckaert G."/>
            <person name="Pohl T."/>
            <person name="Duesterhoeft A."/>
            <person name="Stiekema W."/>
            <person name="Entian K.-D."/>
            <person name="Terryn N."/>
            <person name="Harris B."/>
            <person name="Ansorge W."/>
            <person name="Brandt P."/>
            <person name="Grivell L.A."/>
            <person name="Rieger M."/>
            <person name="Weichselgartner M."/>
            <person name="de Simone V."/>
            <person name="Obermaier B."/>
            <person name="Mache R."/>
            <person name="Mueller M."/>
            <person name="Kreis M."/>
            <person name="Delseny M."/>
            <person name="Puigdomenech P."/>
            <person name="Watson M."/>
            <person name="Schmidtheini T."/>
            <person name="Reichert B."/>
            <person name="Portetelle D."/>
            <person name="Perez-Alonso M."/>
            <person name="Boutry M."/>
            <person name="Bancroft I."/>
            <person name="Vos P."/>
            <person name="Hoheisel J."/>
            <person name="Zimmermann W."/>
            <person name="Wedler H."/>
            <person name="Ridley P."/>
            <person name="Langham S.-A."/>
            <person name="McCullagh B."/>
            <person name="Bilham L."/>
            <person name="Robben J."/>
            <person name="van der Schueren J."/>
            <person name="Grymonprez B."/>
            <person name="Chuang Y.-J."/>
            <person name="Vandenbussche F."/>
            <person name="Braeken M."/>
            <person name="Weltjens I."/>
            <person name="Voet M."/>
            <person name="Bastiaens I."/>
            <person name="Aert R."/>
            <person name="Defoor E."/>
            <person name="Weitzenegger T."/>
            <person name="Bothe G."/>
            <person name="Ramsperger U."/>
            <person name="Hilbert H."/>
            <person name="Braun M."/>
            <person name="Holzer E."/>
            <person name="Brandt A."/>
            <person name="Peters S."/>
            <person name="van Staveren M."/>
            <person name="Dirkse W."/>
            <person name="Mooijman P."/>
            <person name="Klein Lankhorst R."/>
            <person name="Rose M."/>
            <person name="Hauf J."/>
            <person name="Koetter P."/>
            <person name="Berneiser S."/>
            <person name="Hempel S."/>
            <person name="Feldpausch M."/>
            <person name="Lamberth S."/>
            <person name="Van den Daele H."/>
            <person name="De Keyser A."/>
            <person name="Buysshaert C."/>
            <person name="Gielen J."/>
            <person name="Villarroel R."/>
            <person name="De Clercq R."/>
            <person name="van Montagu M."/>
            <person name="Rogers J."/>
            <person name="Cronin A."/>
            <person name="Quail M.A."/>
            <person name="Bray-Allen S."/>
            <person name="Clark L."/>
            <person name="Doggett J."/>
            <person name="Hall S."/>
            <person name="Kay M."/>
            <person name="Lennard N."/>
            <person name="McLay K."/>
            <person name="Mayes R."/>
            <person name="Pettett A."/>
            <person name="Rajandream M.A."/>
            <person name="Lyne M."/>
            <person name="Benes V."/>
            <person name="Rechmann S."/>
            <person name="Borkova D."/>
            <person name="Bloecker H."/>
            <person name="Scharfe M."/>
            <person name="Grimm M."/>
            <person name="Loehnert T.-H."/>
            <person name="Dose S."/>
            <person name="de Haan M."/>
            <person name="Maarse A.C."/>
            <person name="Schaefer M."/>
            <person name="Mueller-Auer S."/>
            <person name="Gabel C."/>
            <person name="Fuchs M."/>
            <person name="Fartmann B."/>
            <person name="Granderath K."/>
            <person name="Dauner D."/>
            <person name="Herzl A."/>
            <person name="Neumann S."/>
            <person name="Argiriou A."/>
            <person name="Vitale D."/>
            <person name="Liguori R."/>
            <person name="Piravandi E."/>
            <person name="Massenet O."/>
            <person name="Quigley F."/>
            <person name="Clabauld G."/>
            <person name="Muendlein A."/>
            <person name="Felber R."/>
            <person name="Schnabl S."/>
            <person name="Hiller R."/>
            <person name="Schmidt W."/>
            <person name="Lecharny A."/>
            <person name="Aubourg S."/>
            <person name="Chefdor F."/>
            <person name="Cooke R."/>
            <person name="Berger C."/>
            <person name="Monfort A."/>
            <person name="Casacuberta E."/>
            <person name="Gibbons T."/>
            <person name="Weber N."/>
            <person name="Vandenbol M."/>
            <person name="Bargues M."/>
            <person name="Terol J."/>
            <person name="Torres A."/>
            <person name="Perez-Perez A."/>
            <person name="Purnelle B."/>
            <person name="Bent E."/>
            <person name="Johnson S."/>
            <person name="Tacon D."/>
            <person name="Jesse T."/>
            <person name="Heijnen L."/>
            <person name="Schwarz S."/>
            <person name="Scholler P."/>
            <person name="Heber S."/>
            <person name="Francs P."/>
            <person name="Bielke C."/>
            <person name="Frishman D."/>
            <person name="Haase D."/>
            <person name="Lemcke K."/>
            <person name="Mewes H.-W."/>
            <person name="Stocker S."/>
            <person name="Zaccaria P."/>
            <person name="Bevan M."/>
            <person name="Wilson R.K."/>
            <person name="de la Bastide M."/>
            <person name="Habermann K."/>
            <person name="Parnell L."/>
            <person name="Dedhia N."/>
            <person name="Gnoj L."/>
            <person name="Schutz K."/>
            <person name="Huang E."/>
            <person name="Spiegel L."/>
            <person name="Sekhon M."/>
            <person name="Murray J."/>
            <person name="Sheet P."/>
            <person name="Cordes M."/>
            <person name="Abu-Threideh J."/>
            <person name="Stoneking T."/>
            <person name="Kalicki J."/>
            <person name="Graves T."/>
            <person name="Harmon G."/>
            <person name="Edwards J."/>
            <person name="Latreille P."/>
            <person name="Courtney L."/>
            <person name="Cloud J."/>
            <person name="Abbott A."/>
            <person name="Scott K."/>
            <person name="Johnson D."/>
            <person name="Minx P."/>
            <person name="Bentley D."/>
            <person name="Fulton B."/>
            <person name="Miller N."/>
            <person name="Greco T."/>
            <person name="Kemp K."/>
            <person name="Kramer J."/>
            <person name="Fulton L."/>
            <person name="Mardis E."/>
            <person name="Dante M."/>
            <person name="Pepin K."/>
            <person name="Hillier L.W."/>
            <person name="Nelson J."/>
            <person name="Spieth J."/>
            <person name="Ryan E."/>
            <person name="Andrews S."/>
            <person name="Geisel C."/>
            <person name="Layman D."/>
            <person name="Du H."/>
            <person name="Ali J."/>
            <person name="Berghoff A."/>
            <person name="Jones K."/>
            <person name="Drone K."/>
            <person name="Cotton M."/>
            <person name="Joshu C."/>
            <person name="Antonoiu B."/>
            <person name="Zidanic M."/>
            <person name="Strong C."/>
            <person name="Sun H."/>
            <person name="Lamar B."/>
            <person name="Yordan C."/>
            <person name="Ma P."/>
            <person name="Zhong J."/>
            <person name="Preston R."/>
            <person name="Vil D."/>
            <person name="Shekher M."/>
            <person name="Matero A."/>
            <person name="Shah R."/>
            <person name="Swaby I.K."/>
            <person name="O'Shaughnessy A."/>
            <person name="Rodriguez M."/>
            <person name="Hoffman J."/>
            <person name="Till S."/>
            <person name="Granat S."/>
            <person name="Shohdy N."/>
            <person name="Hasegawa A."/>
            <person name="Hameed A."/>
            <person name="Lodhi M."/>
            <person name="Johnson A."/>
            <person name="Chen E."/>
            <person name="Marra M.A."/>
            <person name="Martienssen R."/>
            <person name="McCombie W.R."/>
        </authorList>
    </citation>
    <scope>NUCLEOTIDE SEQUENCE [LARGE SCALE GENOMIC DNA]</scope>
    <source>
        <strain>cv. Columbia</strain>
    </source>
</reference>
<reference key="2">
    <citation type="journal article" date="2017" name="Plant J.">
        <title>Araport11: a complete reannotation of the Arabidopsis thaliana reference genome.</title>
        <authorList>
            <person name="Cheng C.Y."/>
            <person name="Krishnakumar V."/>
            <person name="Chan A.P."/>
            <person name="Thibaud-Nissen F."/>
            <person name="Schobel S."/>
            <person name="Town C.D."/>
        </authorList>
    </citation>
    <scope>GENOME REANNOTATION</scope>
    <source>
        <strain>cv. Columbia</strain>
    </source>
</reference>
<reference key="3">
    <citation type="journal article" date="2003" name="Science">
        <title>Empirical analysis of transcriptional activity in the Arabidopsis genome.</title>
        <authorList>
            <person name="Yamada K."/>
            <person name="Lim J."/>
            <person name="Dale J.M."/>
            <person name="Chen H."/>
            <person name="Shinn P."/>
            <person name="Palm C.J."/>
            <person name="Southwick A.M."/>
            <person name="Wu H.C."/>
            <person name="Kim C.J."/>
            <person name="Nguyen M."/>
            <person name="Pham P.K."/>
            <person name="Cheuk R.F."/>
            <person name="Karlin-Newmann G."/>
            <person name="Liu S.X."/>
            <person name="Lam B."/>
            <person name="Sakano H."/>
            <person name="Wu T."/>
            <person name="Yu G."/>
            <person name="Miranda M."/>
            <person name="Quach H.L."/>
            <person name="Tripp M."/>
            <person name="Chang C.H."/>
            <person name="Lee J.M."/>
            <person name="Toriumi M.J."/>
            <person name="Chan M.M."/>
            <person name="Tang C.C."/>
            <person name="Onodera C.S."/>
            <person name="Deng J.M."/>
            <person name="Akiyama K."/>
            <person name="Ansari Y."/>
            <person name="Arakawa T."/>
            <person name="Banh J."/>
            <person name="Banno F."/>
            <person name="Bowser L."/>
            <person name="Brooks S.Y."/>
            <person name="Carninci P."/>
            <person name="Chao Q."/>
            <person name="Choy N."/>
            <person name="Enju A."/>
            <person name="Goldsmith A.D."/>
            <person name="Gurjal M."/>
            <person name="Hansen N.F."/>
            <person name="Hayashizaki Y."/>
            <person name="Johnson-Hopson C."/>
            <person name="Hsuan V.W."/>
            <person name="Iida K."/>
            <person name="Karnes M."/>
            <person name="Khan S."/>
            <person name="Koesema E."/>
            <person name="Ishida J."/>
            <person name="Jiang P.X."/>
            <person name="Jones T."/>
            <person name="Kawai J."/>
            <person name="Kamiya A."/>
            <person name="Meyers C."/>
            <person name="Nakajima M."/>
            <person name="Narusaka M."/>
            <person name="Seki M."/>
            <person name="Sakurai T."/>
            <person name="Satou M."/>
            <person name="Tamse R."/>
            <person name="Vaysberg M."/>
            <person name="Wallender E.K."/>
            <person name="Wong C."/>
            <person name="Yamamura Y."/>
            <person name="Yuan S."/>
            <person name="Shinozaki K."/>
            <person name="Davis R.W."/>
            <person name="Theologis A."/>
            <person name="Ecker J.R."/>
        </authorList>
    </citation>
    <scope>NUCLEOTIDE SEQUENCE [LARGE SCALE MRNA]</scope>
    <source>
        <strain>cv. Columbia</strain>
    </source>
</reference>
<reference key="4">
    <citation type="journal article" date="2003" name="J. Biol. Chem.">
        <title>Biochemical diversity among the 1-amino-cyclopropane-1-carboxylate synthase isozymes encoded by the Arabidopsis gene family.</title>
        <authorList>
            <person name="Yamagami T."/>
            <person name="Tsuchisaka A."/>
            <person name="Yamada K."/>
            <person name="Haddon W.F."/>
            <person name="Harden L.A."/>
            <person name="Theologis A."/>
        </authorList>
    </citation>
    <scope>ENZYME ACTIVITY</scope>
    <scope>TISSUE SPECIFICITY</scope>
    <scope>INDUCTION</scope>
</reference>
<reference key="5">
    <citation type="journal article" date="2010" name="Plant Physiol.">
        <title>Arabidopsis RING E3 ligase XBAT32 regulates lateral root production through its role in ethylene biosynthesis.</title>
        <authorList>
            <person name="Prasad M.E."/>
            <person name="Schofield A."/>
            <person name="Lyzenga W."/>
            <person name="Liu H."/>
            <person name="Stone S.L."/>
        </authorList>
    </citation>
    <scope>INTERACTION WITH XBAT32</scope>
    <scope>UBIQUITINATION</scope>
</reference>
<protein>
    <recommendedName>
        <fullName>1-aminocyclopropane-1-carboxylate synthase 7</fullName>
        <shortName>ACC synthase 7</shortName>
        <ecNumber>4.4.1.14</ecNumber>
    </recommendedName>
    <alternativeName>
        <fullName>S-adenosyl-L-methionine methylthioadenosine-lyase 7</fullName>
    </alternativeName>
</protein>
<sequence>MGLPLMMERSSNNNNVELSRVAVSDTHGEDSPYFAGWKAYDENPYDESHNPSGVIQMGLAENQVSFDLLETYLEKKNPEGSMWGSKGAPGFRENALFQDYHGLKTFRQAMASFMEQIRGGKARFDPDRIVLTAGATAANELLTFILADPNDALLVPTPYYPGFDRDLRWRTGVKIVPIHCDSSNHFQITPEALESAYQTARDANIRVRGVLITNPSNPLGATVQKKVLEDLLDFCVRKNIHLVSDEIYSGSVFHASEFTSVAEIVENIDDVSVKERVHIVYSLSKDLGLPGFRVGTIYSYNDNVVRTARRMSSFTLVSSQTQHMLASMLSDEEFTEKYIRINRERLRRRYDTIVEGLKKAGIECLKGNAGLFCWMNLGFLLEKKTKDGELQLWDVILKELNLNISPGSSCHCSEVGWFRVCFANMSENTLEIALKRIHEFMDRRRRF</sequence>
<keyword id="KW-0002">3D-structure</keyword>
<keyword id="KW-0266">Ethylene biosynthesis</keyword>
<keyword id="KW-0292">Fruit ripening</keyword>
<keyword id="KW-0456">Lyase</keyword>
<keyword id="KW-0663">Pyridoxal phosphate</keyword>
<keyword id="KW-1185">Reference proteome</keyword>
<keyword id="KW-0949">S-adenosyl-L-methionine</keyword>
<keyword id="KW-0832">Ubl conjugation</keyword>
<dbReference type="EC" id="4.4.1.14"/>
<dbReference type="EMBL" id="AL049171">
    <property type="protein sequence ID" value="CAB38949.1"/>
    <property type="molecule type" value="Genomic_DNA"/>
</dbReference>
<dbReference type="EMBL" id="AL161564">
    <property type="protein sequence ID" value="CAB79475.1"/>
    <property type="molecule type" value="Genomic_DNA"/>
</dbReference>
<dbReference type="EMBL" id="CP002687">
    <property type="protein sequence ID" value="AEE85169.1"/>
    <property type="molecule type" value="Genomic_DNA"/>
</dbReference>
<dbReference type="EMBL" id="AF332390">
    <property type="protein sequence ID" value="AAG48754.1"/>
    <property type="molecule type" value="mRNA"/>
</dbReference>
<dbReference type="PIR" id="T06004">
    <property type="entry name" value="T06004"/>
</dbReference>
<dbReference type="RefSeq" id="NP_194350.1">
    <property type="nucleotide sequence ID" value="NM_118753.3"/>
</dbReference>
<dbReference type="PDB" id="7DLW">
    <property type="method" value="X-ray"/>
    <property type="resolution" value="2.19 A"/>
    <property type="chains" value="A/B/C/D=1-447"/>
</dbReference>
<dbReference type="PDB" id="7DLY">
    <property type="method" value="X-ray"/>
    <property type="resolution" value="2.94 A"/>
    <property type="chains" value="A/B=1-447"/>
</dbReference>
<dbReference type="PDBsum" id="7DLW"/>
<dbReference type="PDBsum" id="7DLY"/>
<dbReference type="SMR" id="Q9STR4"/>
<dbReference type="BioGRID" id="14013">
    <property type="interactions" value="4"/>
</dbReference>
<dbReference type="FunCoup" id="Q9STR4">
    <property type="interactions" value="288"/>
</dbReference>
<dbReference type="IntAct" id="Q9STR4">
    <property type="interactions" value="2"/>
</dbReference>
<dbReference type="STRING" id="3702.Q9STR4"/>
<dbReference type="iPTMnet" id="Q9STR4"/>
<dbReference type="PaxDb" id="3702-AT4G26200.1"/>
<dbReference type="ProteomicsDB" id="244543"/>
<dbReference type="EnsemblPlants" id="AT4G26200.1">
    <property type="protein sequence ID" value="AT4G26200.1"/>
    <property type="gene ID" value="AT4G26200"/>
</dbReference>
<dbReference type="GeneID" id="828726"/>
<dbReference type="Gramene" id="AT4G26200.1">
    <property type="protein sequence ID" value="AT4G26200.1"/>
    <property type="gene ID" value="AT4G26200"/>
</dbReference>
<dbReference type="KEGG" id="ath:AT4G26200"/>
<dbReference type="Araport" id="AT4G26200"/>
<dbReference type="TAIR" id="AT4G26200">
    <property type="gene designation" value="ACS7"/>
</dbReference>
<dbReference type="eggNOG" id="KOG0256">
    <property type="taxonomic scope" value="Eukaryota"/>
</dbReference>
<dbReference type="HOGENOM" id="CLU_017584_1_0_1"/>
<dbReference type="InParanoid" id="Q9STR4"/>
<dbReference type="OMA" id="PYYGTFV"/>
<dbReference type="PhylomeDB" id="Q9STR4"/>
<dbReference type="SABIO-RK" id="Q9STR4"/>
<dbReference type="UniPathway" id="UPA00384">
    <property type="reaction ID" value="UER00562"/>
</dbReference>
<dbReference type="PRO" id="PR:Q9STR4"/>
<dbReference type="Proteomes" id="UP000006548">
    <property type="component" value="Chromosome 4"/>
</dbReference>
<dbReference type="ExpressionAtlas" id="Q9STR4">
    <property type="expression patterns" value="baseline and differential"/>
</dbReference>
<dbReference type="GO" id="GO:0016847">
    <property type="term" value="F:1-aminocyclopropane-1-carboxylate synthase activity"/>
    <property type="evidence" value="ECO:0000314"/>
    <property type="project" value="TAIR"/>
</dbReference>
<dbReference type="GO" id="GO:0042802">
    <property type="term" value="F:identical protein binding"/>
    <property type="evidence" value="ECO:0000353"/>
    <property type="project" value="IntAct"/>
</dbReference>
<dbReference type="GO" id="GO:0030170">
    <property type="term" value="F:pyridoxal phosphate binding"/>
    <property type="evidence" value="ECO:0007669"/>
    <property type="project" value="InterPro"/>
</dbReference>
<dbReference type="GO" id="GO:0009693">
    <property type="term" value="P:ethylene biosynthetic process"/>
    <property type="evidence" value="ECO:0000304"/>
    <property type="project" value="TAIR"/>
</dbReference>
<dbReference type="GO" id="GO:0009835">
    <property type="term" value="P:fruit ripening"/>
    <property type="evidence" value="ECO:0007669"/>
    <property type="project" value="UniProtKB-KW"/>
</dbReference>
<dbReference type="CDD" id="cd00609">
    <property type="entry name" value="AAT_like"/>
    <property type="match status" value="1"/>
</dbReference>
<dbReference type="FunFam" id="3.40.640.10:FF:000051">
    <property type="entry name" value="1-aminocyclopropane-1-carboxylate synthase 3"/>
    <property type="match status" value="1"/>
</dbReference>
<dbReference type="Gene3D" id="3.90.1150.10">
    <property type="entry name" value="Aspartate Aminotransferase, domain 1"/>
    <property type="match status" value="1"/>
</dbReference>
<dbReference type="Gene3D" id="3.40.640.10">
    <property type="entry name" value="Type I PLP-dependent aspartate aminotransferase-like (Major domain)"/>
    <property type="match status" value="1"/>
</dbReference>
<dbReference type="InterPro" id="IPR004839">
    <property type="entry name" value="Aminotransferase_I/II_large"/>
</dbReference>
<dbReference type="InterPro" id="IPR050478">
    <property type="entry name" value="Ethylene_sulfur-biosynth"/>
</dbReference>
<dbReference type="InterPro" id="IPR004838">
    <property type="entry name" value="NHTrfase_class1_PyrdxlP-BS"/>
</dbReference>
<dbReference type="InterPro" id="IPR015424">
    <property type="entry name" value="PyrdxlP-dep_Trfase"/>
</dbReference>
<dbReference type="InterPro" id="IPR015421">
    <property type="entry name" value="PyrdxlP-dep_Trfase_major"/>
</dbReference>
<dbReference type="InterPro" id="IPR015422">
    <property type="entry name" value="PyrdxlP-dep_Trfase_small"/>
</dbReference>
<dbReference type="PANTHER" id="PTHR43795:SF39">
    <property type="entry name" value="AMINOTRANSFERASE CLASS I_CLASSII DOMAIN-CONTAINING PROTEIN"/>
    <property type="match status" value="1"/>
</dbReference>
<dbReference type="PANTHER" id="PTHR43795">
    <property type="entry name" value="BIFUNCTIONAL ASPARTATE AMINOTRANSFERASE AND GLUTAMATE/ASPARTATE-PREPHENATE AMINOTRANSFERASE-RELATED"/>
    <property type="match status" value="1"/>
</dbReference>
<dbReference type="Pfam" id="PF00155">
    <property type="entry name" value="Aminotran_1_2"/>
    <property type="match status" value="1"/>
</dbReference>
<dbReference type="PRINTS" id="PR00753">
    <property type="entry name" value="ACCSYNTHASE"/>
</dbReference>
<dbReference type="SUPFAM" id="SSF53383">
    <property type="entry name" value="PLP-dependent transferases"/>
    <property type="match status" value="1"/>
</dbReference>
<dbReference type="PROSITE" id="PS00105">
    <property type="entry name" value="AA_TRANSFER_CLASS_1"/>
    <property type="match status" value="1"/>
</dbReference>